<accession>Q04IN8</accession>
<accession>P11990</accession>
<comment type="function">
    <text evidence="2 3 4 7 9">A cholesterol-dependent toxin that causes cytolysis by forming pores in cholesterol-containing host membranes. After binding to target membranes, the protein undergoes a major conformation change, leading to its insertion in the host membrane and formation of an oligomeric pore complex. Cholesterol is required for binding to host membranes, membrane insertion and pore formation; cholesterol binding is mediated by a Thr-Leu pair in the C-terminus. Can be reversibly inactivated by oxidation.</text>
</comment>
<comment type="activity regulation">
    <text evidence="4">Erythrocytes hemolysis is inhibited by cholesterol.</text>
</comment>
<comment type="subunit">
    <text evidence="2 4 5 6 7 11">Elongated monomers align along their lengths, indicating intersubunit contacts and suggesting the prepore structure (PubMed:15851031, PubMed:26333773, PubMed:26403197, PubMed:27796097, PubMed:28323617). Modeling based on cryo-EM shows a homooligomeric pore complex containing 38-44 subunits; when inserted in the host membrane (Probable). The size of isolated pores is detergent-dependent; in amphipol A8-35 homogenous rings form with 42 subunits (PubMed:28323617).</text>
</comment>
<comment type="subcellular location">
    <subcellularLocation>
        <location evidence="1">Secreted</location>
    </subcellularLocation>
    <subcellularLocation>
        <location evidence="7 11">Host cell membrane</location>
        <topology evidence="7">Multi-pass membrane protein</topology>
    </subcellularLocation>
    <text evidence="1 2 7">Secreted as soluble protein by the accessory Sec system (By similarity). It then inserts into the host cell membrane and forms pores formed by transmembrane beta-strands (PubMed:15851031, PubMed:28323617).</text>
</comment>
<comment type="domain">
    <text evidence="2 4 5 6 7 9">A highly conserved undecapeptide in the C-terminus has residues important for membrane binding and cell lysis (PubMed:9445384). Mature protein has 3 discontinuous domains; D1, D2, D3 followed by C-terminal D4 (PubMed:15851031, PubMed:26333773, PubMed:26403197, PubMed:27796097, PubMed:28323617). The domains rearrange substantially upon membrane insertion, in particular alpha-helices in D3 refold to form the transmembrane beta-strands (PubMed:15851031, PubMed:28323617). The relative position of domain D4 changes, allowing it to interact with host membranes (PubMed:26333773, PubMed:27796097, PubMed:28323617).</text>
</comment>
<comment type="similarity">
    <text evidence="10">Belongs to the cholesterol-dependent cytolysin family.</text>
</comment>
<gene>
    <name type="primary">ply</name>
    <name type="ordered locus">SPD_1726</name>
</gene>
<proteinExistence type="evidence at protein level"/>
<evidence type="ECO:0000250" key="1">
    <source>
        <dbReference type="UniProtKB" id="P0C2J9"/>
    </source>
</evidence>
<evidence type="ECO:0000269" key="2">
    <source>
    </source>
</evidence>
<evidence type="ECO:0000269" key="3">
    <source>
    </source>
</evidence>
<evidence type="ECO:0000269" key="4">
    <source>
    </source>
</evidence>
<evidence type="ECO:0000269" key="5">
    <source>
    </source>
</evidence>
<evidence type="ECO:0000269" key="6">
    <source>
    </source>
</evidence>
<evidence type="ECO:0000269" key="7">
    <source>
    </source>
</evidence>
<evidence type="ECO:0000269" key="8">
    <source>
    </source>
</evidence>
<evidence type="ECO:0000269" key="9">
    <source>
    </source>
</evidence>
<evidence type="ECO:0000305" key="10"/>
<evidence type="ECO:0000305" key="11">
    <source>
    </source>
</evidence>
<evidence type="ECO:0007744" key="12">
    <source>
        <dbReference type="PDB" id="4ZGH"/>
    </source>
</evidence>
<evidence type="ECO:0007744" key="13">
    <source>
        <dbReference type="PDB" id="5AOD"/>
    </source>
</evidence>
<evidence type="ECO:0007744" key="14">
    <source>
        <dbReference type="PDB" id="5AOE"/>
    </source>
</evidence>
<evidence type="ECO:0007744" key="15">
    <source>
        <dbReference type="PDB" id="5AOF"/>
    </source>
</evidence>
<evidence type="ECO:0007744" key="16">
    <source>
        <dbReference type="PDB" id="5CR6"/>
    </source>
</evidence>
<evidence type="ECO:0007744" key="17">
    <source>
        <dbReference type="PDB" id="5CR8"/>
    </source>
</evidence>
<evidence type="ECO:0007744" key="18">
    <source>
        <dbReference type="PDB" id="5LY6"/>
    </source>
</evidence>
<evidence type="ECO:0007829" key="19">
    <source>
        <dbReference type="PDB" id="4ZGH"/>
    </source>
</evidence>
<evidence type="ECO:0007829" key="20">
    <source>
        <dbReference type="PDB" id="5CR6"/>
    </source>
</evidence>
<feature type="initiator methionine" description="Removed" evidence="8">
    <location>
        <position position="1"/>
    </location>
</feature>
<feature type="chain" id="PRO_0000279546" description="Pneumolysin">
    <location>
        <begin position="2"/>
        <end position="471"/>
    </location>
</feature>
<feature type="transmembrane region" description="Beta stranded" evidence="7 18">
    <location>
        <begin position="158"/>
        <end position="171"/>
    </location>
</feature>
<feature type="transmembrane region" description="Beta stranded" evidence="7 18">
    <location>
        <begin position="178"/>
        <end position="187"/>
    </location>
</feature>
<feature type="transmembrane region" description="Beta stranded" evidence="7 18">
    <location>
        <begin position="256"/>
        <end position="265"/>
    </location>
</feature>
<feature type="transmembrane region" description="Beta stranded" evidence="7 18">
    <location>
        <begin position="273"/>
        <end position="285"/>
    </location>
</feature>
<feature type="short sequence motif" description="Conserved undecapeptide" evidence="10">
    <location>
        <begin position="427"/>
        <end position="437"/>
    </location>
</feature>
<feature type="short sequence motif" description="Cholesterol binding" evidence="3">
    <location>
        <begin position="459"/>
        <end position="460"/>
    </location>
</feature>
<feature type="mutagenesis site" description="Loss of hemolytic activity." evidence="5">
    <original>K</original>
    <variation>A</variation>
    <location>
        <position position="18"/>
    </location>
</feature>
<feature type="mutagenesis site" description="15% hemolytic activity, forms incomplete rings on liposomes." evidence="6">
    <original>T</original>
    <variation>A</variation>
    <location>
        <position position="63"/>
    </location>
</feature>
<feature type="mutagenesis site" description="Loss of hemolytic activity." evidence="5">
    <original>NDS</original>
    <variation>WDW</variation>
    <location>
        <begin position="66"/>
        <end position="68"/>
    </location>
</feature>
<feature type="mutagenesis site" description="50% hemolytic activity." evidence="5">
    <original>N</original>
    <variation>W</variation>
    <location>
        <position position="66"/>
    </location>
</feature>
<feature type="mutagenesis site" description="Wild-type hemolytic activity." evidence="5">
    <original>S</original>
    <variation>W</variation>
    <location>
        <position position="68"/>
    </location>
</feature>
<feature type="mutagenesis site" description="44% hemolytic activity, forms incomplete rings on liposomes." evidence="6">
    <original>N</original>
    <variation>A</variation>
    <location>
        <position position="85"/>
    </location>
</feature>
<feature type="mutagenesis site" description="4% hemolytic activity." evidence="4">
    <original>T</original>
    <variation>E</variation>
    <location>
        <position position="88"/>
    </location>
</feature>
<feature type="mutagenesis site" description="1% hemolytic activity, forms linear oligomers on liposomes rather than pores." evidence="6">
    <original>D</original>
    <variation>A</variation>
    <location>
        <position position="102"/>
    </location>
</feature>
<feature type="mutagenesis site" description="Loss of hemolytic activity, does not bind membrane, does not form pores." evidence="7">
    <location>
        <begin position="146"/>
        <end position="147"/>
    </location>
</feature>
<feature type="mutagenesis site" description="2% hemolytic activity." evidence="4">
    <original>R</original>
    <variation>E</variation>
    <location>
        <position position="147"/>
    </location>
</feature>
<feature type="mutagenesis site" description="12% hemolytic activity; when associated with K-260." evidence="6">
    <original>K</original>
    <variation>D</variation>
    <location>
        <position position="152"/>
    </location>
</feature>
<feature type="mutagenesis site" description="20% hemolytic activity, inhibits membrane insertion, forms prepores on liposomes which detach easily and rarely convert to pores." evidence="7">
    <original>D</original>
    <variation>A</variation>
    <location>
        <position position="168"/>
    </location>
</feature>
<feature type="mutagenesis site" description="42% hemolytic activity." evidence="6">
    <original>Q</original>
    <variation>E</variation>
    <location>
        <position position="191"/>
    </location>
</feature>
<feature type="mutagenesis site" description="17% hemolytic activity, forms linear oligomers on liposomes rather than pores." evidence="6">
    <original>D</original>
    <variation>A</variation>
    <location>
        <position position="205"/>
    </location>
</feature>
<feature type="mutagenesis site" description="Loss of hemolytic activity." evidence="4">
    <original>D</original>
    <variation>R</variation>
    <location>
        <position position="205"/>
    </location>
</feature>
<feature type="mutagenesis site" description="4% hemolytic activity." evidence="5">
    <original>K</original>
    <variation>A</variation>
    <location>
        <position position="208"/>
    </location>
</feature>
<feature type="mutagenesis site" description="6% hemolytic activity." evidence="4">
    <original>R</original>
    <variation>A</variation>
    <location>
        <position position="226"/>
    </location>
</feature>
<feature type="mutagenesis site" description="22% hemolytic activity. 12% hemolytic activity; when associated with D-152." evidence="6">
    <original>E</original>
    <variation>K</variation>
    <location>
        <position position="260"/>
    </location>
</feature>
<feature type="mutagenesis site" description="76% hemolytic activity." evidence="6">
    <original>E</original>
    <variation>D</variation>
    <location>
        <position position="264"/>
    </location>
</feature>
<feature type="mutagenesis site" description="320-fold decrease in hemolytic activity." evidence="4">
    <original>T</original>
    <variation>R</variation>
    <location>
        <position position="304"/>
    </location>
</feature>
<feature type="mutagenesis site" description="Loss of hemolytic activity." evidence="4">
    <original>N</original>
    <variation>R</variation>
    <location>
        <position position="339"/>
    </location>
</feature>
<feature type="mutagenesis site" description="15% hemolytic activity." evidence="6">
    <original>T</original>
    <variation>L</variation>
    <location>
        <position position="405"/>
    </location>
</feature>
<feature type="mutagenesis site" description="Wild-type hemolytic activity." evidence="9">
    <original>C</original>
    <variation>A</variation>
    <location>
        <position position="428"/>
    </location>
</feature>
<feature type="mutagenesis site" description="3% hemolytic activity." evidence="9">
    <original>C</original>
    <variation>G</variation>
    <location>
        <position position="428"/>
    </location>
</feature>
<feature type="mutagenesis site" description="25% hemolytic activity." evidence="9">
    <original>C</original>
    <variation>S</variation>
    <location>
        <position position="428"/>
    </location>
</feature>
<feature type="mutagenesis site" description="1% hemolytic activity." evidence="9">
    <original>W</original>
    <variation>F</variation>
    <location>
        <position position="433"/>
    </location>
</feature>
<feature type="mutagenesis site" description="5% hemolytic activity." evidence="4">
    <original>EWWR</original>
    <variation>AWWA</variation>
    <location>
        <begin position="434"/>
        <end position="437"/>
    </location>
</feature>
<feature type="mutagenesis site" description="50% hemolytic activity." evidence="9">
    <original>E</original>
    <variation>D</variation>
    <location>
        <position position="434"/>
    </location>
</feature>
<feature type="mutagenesis site" description="20% hemolytic activity." evidence="9">
    <original>E</original>
    <variation>Q</variation>
    <location>
        <position position="434"/>
    </location>
</feature>
<feature type="mutagenesis site" description="20% hemolytic activity." evidence="9">
    <original>W</original>
    <variation>F</variation>
    <location>
        <position position="435"/>
    </location>
</feature>
<feature type="mutagenesis site" description="50% hemolytic activity." evidence="9">
    <original>W</original>
    <variation>F</variation>
    <location>
        <position position="436"/>
    </location>
</feature>
<feature type="mutagenesis site" description="Loss of hemolytic activity, loss of host membrane binding, loss of cholesterol binding." evidence="3">
    <original>TL</original>
    <variation>GG</variation>
    <location>
        <begin position="459"/>
        <end position="460"/>
    </location>
</feature>
<feature type="helix" evidence="20">
    <location>
        <begin position="2"/>
        <end position="12"/>
    </location>
</feature>
<feature type="turn" evidence="20">
    <location>
        <begin position="17"/>
        <end position="21"/>
    </location>
</feature>
<feature type="strand" evidence="20">
    <location>
        <begin position="22"/>
        <end position="24"/>
    </location>
</feature>
<feature type="strand" evidence="20">
    <location>
        <begin position="33"/>
        <end position="39"/>
    </location>
</feature>
<feature type="strand" evidence="20">
    <location>
        <begin position="42"/>
        <end position="61"/>
    </location>
</feature>
<feature type="strand" evidence="20">
    <location>
        <begin position="75"/>
        <end position="79"/>
    </location>
</feature>
<feature type="helix" evidence="20">
    <location>
        <begin position="80"/>
        <end position="83"/>
    </location>
</feature>
<feature type="strand" evidence="20">
    <location>
        <begin position="97"/>
        <end position="101"/>
    </location>
</feature>
<feature type="helix" evidence="20">
    <location>
        <begin position="108"/>
        <end position="111"/>
    </location>
</feature>
<feature type="strand" evidence="20">
    <location>
        <begin position="112"/>
        <end position="117"/>
    </location>
</feature>
<feature type="helix" evidence="20">
    <location>
        <begin position="120"/>
        <end position="137"/>
    </location>
</feature>
<feature type="turn" evidence="20">
    <location>
        <begin position="138"/>
        <end position="141"/>
    </location>
</feature>
<feature type="strand" evidence="20">
    <location>
        <begin position="147"/>
        <end position="154"/>
    </location>
</feature>
<feature type="helix" evidence="20">
    <location>
        <begin position="158"/>
        <end position="165"/>
    </location>
</feature>
<feature type="helix" evidence="20">
    <location>
        <begin position="170"/>
        <end position="176"/>
    </location>
</feature>
<feature type="helix" evidence="20">
    <location>
        <begin position="180"/>
        <end position="184"/>
    </location>
</feature>
<feature type="strand" evidence="20">
    <location>
        <begin position="189"/>
        <end position="203"/>
    </location>
</feature>
<feature type="turn" evidence="20">
    <location>
        <begin position="210"/>
        <end position="213"/>
    </location>
</feature>
<feature type="helix" evidence="20">
    <location>
        <begin position="222"/>
        <end position="226"/>
    </location>
</feature>
<feature type="strand" evidence="20">
    <location>
        <begin position="229"/>
        <end position="232"/>
    </location>
</feature>
<feature type="strand" evidence="20">
    <location>
        <begin position="234"/>
        <end position="252"/>
    </location>
</feature>
<feature type="helix" evidence="20">
    <location>
        <begin position="259"/>
        <end position="267"/>
    </location>
</feature>
<feature type="helix" evidence="20">
    <location>
        <begin position="277"/>
        <end position="283"/>
    </location>
</feature>
<feature type="strand" evidence="20">
    <location>
        <begin position="285"/>
        <end position="292"/>
    </location>
</feature>
<feature type="strand" evidence="20">
    <location>
        <begin position="301"/>
        <end position="305"/>
    </location>
</feature>
<feature type="helix" evidence="20">
    <location>
        <begin position="307"/>
        <end position="309"/>
    </location>
</feature>
<feature type="helix" evidence="20">
    <location>
        <begin position="310"/>
        <end position="315"/>
    </location>
</feature>
<feature type="strand" evidence="19">
    <location>
        <begin position="322"/>
        <end position="324"/>
    </location>
</feature>
<feature type="strand" evidence="20">
    <location>
        <begin position="327"/>
        <end position="339"/>
    </location>
</feature>
<feature type="strand" evidence="20">
    <location>
        <begin position="344"/>
        <end position="359"/>
    </location>
</feature>
<feature type="strand" evidence="20">
    <location>
        <begin position="361"/>
        <end position="367"/>
    </location>
</feature>
<feature type="strand" evidence="20">
    <location>
        <begin position="369"/>
        <end position="371"/>
    </location>
</feature>
<feature type="strand" evidence="20">
    <location>
        <begin position="373"/>
        <end position="384"/>
    </location>
</feature>
<feature type="strand" evidence="20">
    <location>
        <begin position="390"/>
        <end position="396"/>
    </location>
</feature>
<feature type="turn" evidence="20">
    <location>
        <begin position="398"/>
        <end position="401"/>
    </location>
</feature>
<feature type="strand" evidence="20">
    <location>
        <begin position="406"/>
        <end position="414"/>
    </location>
</feature>
<feature type="strand" evidence="20">
    <location>
        <begin position="418"/>
        <end position="431"/>
    </location>
</feature>
<feature type="strand" evidence="20">
    <location>
        <begin position="434"/>
        <end position="444"/>
    </location>
</feature>
<feature type="strand" evidence="20">
    <location>
        <begin position="449"/>
        <end position="469"/>
    </location>
</feature>
<reference key="1">
    <citation type="journal article" date="1987" name="Infect. Immun.">
        <title>Molecular cloning, characterization, and complete nucleotide sequence of the gene for pneumolysin, the sulfhydryl-activated toxin of Streptococcus pneumoniae.</title>
        <authorList>
            <person name="Walker J.A."/>
            <person name="Allen R.L."/>
            <person name="Falmagne P."/>
            <person name="Johnson M.K."/>
            <person name="Boulnois G.J."/>
        </authorList>
    </citation>
    <scope>NUCLEOTIDE SEQUENCE [GENOMIC DNA]</scope>
    <scope>PROTEIN SEQUENCE OF 2-17</scope>
    <source>
        <strain>D39 / NCTC 7466</strain>
    </source>
</reference>
<reference key="2">
    <citation type="journal article" date="2007" name="J. Bacteriol.">
        <title>Genome sequence of Avery's virulent serotype 2 strain D39 of Streptococcus pneumoniae and comparison with that of unencapsulated laboratory strain R6.</title>
        <authorList>
            <person name="Lanie J.A."/>
            <person name="Ng W.-L."/>
            <person name="Kazmierczak K.M."/>
            <person name="Andrzejewski T.M."/>
            <person name="Davidsen T.M."/>
            <person name="Wayne K.J."/>
            <person name="Tettelin H."/>
            <person name="Glass J.I."/>
            <person name="Winkler M.E."/>
        </authorList>
    </citation>
    <scope>NUCLEOTIDE SEQUENCE [LARGE SCALE GENOMIC DNA]</scope>
    <source>
        <strain>D39 / NCTC 7466</strain>
    </source>
</reference>
<reference key="3">
    <citation type="journal article" date="1998" name="Biochem. J.">
        <title>A conserved tryptophan in pneumolysin is a determinant of the characteristics of channels formed by pneumolysin in cells and planar lipid bilayers.</title>
        <authorList>
            <person name="Korchev Y.E."/>
            <person name="Bashford C.L."/>
            <person name="Pederzolli C."/>
            <person name="Pasternak C.A."/>
            <person name="Morgan P.J."/>
            <person name="Andrew P.W."/>
            <person name="Mitchell T.J."/>
        </authorList>
    </citation>
    <scope>FUNCTION</scope>
    <scope>DOMAIN</scope>
    <scope>MUTAGENESIS OF CYS-428; TRP-433; GLU-434; TRP-435 AND TRP-436</scope>
    <source>
        <strain>D39 / NCTC 7466</strain>
    </source>
</reference>
<reference key="4">
    <citation type="journal article" date="2005" name="Cell">
        <title>Structural basis of pore formation by the bacterial toxin pneumolysin.</title>
        <authorList>
            <person name="Tilley S.J."/>
            <person name="Orlova E.V."/>
            <person name="Gilbert R.J."/>
            <person name="Andrew P.W."/>
            <person name="Saibil H.R."/>
        </authorList>
    </citation>
    <scope>FUNCTION</scope>
    <scope>SUBUNIT</scope>
    <scope>SUBCELLULAR LOCATION</scope>
    <scope>DOMAIN</scope>
</reference>
<reference key="5">
    <citation type="journal article" date="2010" name="Proc. Natl. Acad. Sci. U.S.A.">
        <title>Only two amino acids are essential for cytolytic toxin recognition of cholesterol at the membrane surface.</title>
        <authorList>
            <person name="Farrand A.J."/>
            <person name="LaChapelle S."/>
            <person name="Hotze E.M."/>
            <person name="Johnson A.E."/>
            <person name="Tweten R.K."/>
        </authorList>
    </citation>
    <scope>FUNCTION</scope>
    <scope>CHOLESTEROL-BINDING</scope>
    <scope>MUTAGENESIS OF 459-THR-LEU-460</scope>
</reference>
<reference evidence="16 17" key="6">
    <citation type="journal article" date="2015" name="Sci. Rep.">
        <title>The Crystal Structure of Pneumolysin at 2.0 A Resolution Reveals the Molecular Packing of the Pre-pore Complex.</title>
        <authorList>
            <person name="Marshall J.E."/>
            <person name="Faraj B.H."/>
            <person name="Gingras A.R."/>
            <person name="Lonnen R."/>
            <person name="Sheikh M.A."/>
            <person name="El-Mezgueldi M."/>
            <person name="Moody P.C."/>
            <person name="Andrew P.W."/>
            <person name="Wallis R."/>
        </authorList>
    </citation>
    <scope>X-RAY CRYSTALLOGRAPHY (1.98 ANGSTROMS)</scope>
    <scope>FUNCTION</scope>
    <scope>ACTIVITY REGULATION</scope>
    <scope>DOMAIN</scope>
    <scope>MUTAGENESIS OF THR-88; ARG-147; ASP-205; ARG-226; THR-304; ASN-339 AND 434-GLU--ARG-437</scope>
    <source>
        <strain>D39 / NCTC 7466</strain>
    </source>
</reference>
<reference evidence="12" key="7">
    <citation type="journal article" date="2015" name="Sci. Rep.">
        <title>Crystal structure of Streptococcus pneumoniae pneumolysin provides key insights into early steps of pore formation.</title>
        <authorList>
            <person name="Lawrence S.L."/>
            <person name="Feil S.C."/>
            <person name="Morton C.J."/>
            <person name="Farrand A.J."/>
            <person name="Mulhern T.D."/>
            <person name="Gorman M.A."/>
            <person name="Wade K.R."/>
            <person name="Tweten R.K."/>
            <person name="Parker M.W."/>
        </authorList>
    </citation>
    <scope>X-RAY CRYSTALLOGRAPHY (2.90 ANGSTROMS) OF 2-470</scope>
    <scope>DOMAIN</scope>
    <scope>MUTAGENESIS OF LYS-18; 66-ASN--SER-68; ASN-66; SER-68 AND LYS-208</scope>
    <source>
        <strain>D39 / NCTC 7466</strain>
    </source>
</reference>
<reference evidence="13" key="8">
    <citation type="journal article" date="2016" name="Nano Lett.">
        <title>Unraveling the Pore-Forming Steps of Pneumolysin from Streptococcus pneumoniae.</title>
        <authorList>
            <person name="van Pee K."/>
            <person name="Mulvihill E."/>
            <person name="Mueller D.J."/>
            <person name="Yildiz O."/>
        </authorList>
    </citation>
    <scope>X-RAY CRYSTALLOGRAPHY (2.40 ANGSTROMS)</scope>
    <scope>DOMAIN</scope>
    <scope>MUTAGENESIS OF THR-63; ASN-85; ASP-102; LYS-152; GLN-191; ASP-205; GLU-260; GLU-264 AND THR-405</scope>
</reference>
<reference evidence="14 15 18" key="9">
    <citation type="journal article" date="2017" name="Elife">
        <title>CryoEM structures of membrane pore and prepore complex reveal cytolytic mechanism of Pneumolysin.</title>
        <authorList>
            <person name="van Pee K."/>
            <person name="Neuhaus A."/>
            <person name="D'Imprima E."/>
            <person name="Mills D.J."/>
            <person name="Kuhlbrandt W."/>
            <person name="Yildiz O."/>
        </authorList>
    </citation>
    <scope>STRUCTURE BY ELECTRON MICROSCOPY (4.50 ANGSTROMS) OF WHOLE PORE</scope>
    <scope>X-RAY CRYSTALLOGRAPHY (2.45 ANGSTROMS) OF NON-HEMOLYTIC MUTANTS</scope>
    <scope>PORE FORMATION</scope>
    <scope>SUBUNIT</scope>
    <scope>DOMAIN</scope>
    <scope>MUTAGENESIS OF 146-ALA-ARG-147 AND ASP-168</scope>
    <source>
        <strain>D39 / NCTC 7466</strain>
    </source>
</reference>
<organism>
    <name type="scientific">Streptococcus pneumoniae serotype 2 (strain D39 / NCTC 7466)</name>
    <dbReference type="NCBI Taxonomy" id="373153"/>
    <lineage>
        <taxon>Bacteria</taxon>
        <taxon>Bacillati</taxon>
        <taxon>Bacillota</taxon>
        <taxon>Bacilli</taxon>
        <taxon>Lactobacillales</taxon>
        <taxon>Streptococcaceae</taxon>
        <taxon>Streptococcus</taxon>
    </lineage>
</organism>
<protein>
    <recommendedName>
        <fullName>Pneumolysin</fullName>
        <shortName>PLY</shortName>
    </recommendedName>
    <alternativeName>
        <fullName>Thiol-activated cytolysin</fullName>
    </alternativeName>
</protein>
<dbReference type="EMBL" id="X52474">
    <property type="protein sequence ID" value="CAA36714.1"/>
    <property type="molecule type" value="Genomic_DNA"/>
</dbReference>
<dbReference type="EMBL" id="M17717">
    <property type="protein sequence ID" value="AAA26915.1"/>
    <property type="molecule type" value="Genomic_DNA"/>
</dbReference>
<dbReference type="EMBL" id="CP000410">
    <property type="protein sequence ID" value="ABJ53672.1"/>
    <property type="molecule type" value="Genomic_DNA"/>
</dbReference>
<dbReference type="RefSeq" id="WP_001284359.1">
    <property type="nucleotide sequence ID" value="NZ_JAMLJR010000010.1"/>
</dbReference>
<dbReference type="PDB" id="4ZGH">
    <property type="method" value="X-ray"/>
    <property type="resolution" value="2.90 A"/>
    <property type="chains" value="A=2-470"/>
</dbReference>
<dbReference type="PDB" id="5AOD">
    <property type="method" value="X-ray"/>
    <property type="resolution" value="2.40 A"/>
    <property type="chains" value="A=1-471"/>
</dbReference>
<dbReference type="PDB" id="5AOE">
    <property type="method" value="X-ray"/>
    <property type="resolution" value="2.50 A"/>
    <property type="chains" value="A/B=1-471"/>
</dbReference>
<dbReference type="PDB" id="5AOF">
    <property type="method" value="X-ray"/>
    <property type="resolution" value="2.45 A"/>
    <property type="chains" value="A=1-470"/>
</dbReference>
<dbReference type="PDB" id="5CR6">
    <property type="method" value="X-ray"/>
    <property type="resolution" value="1.98 A"/>
    <property type="chains" value="D=1-471"/>
</dbReference>
<dbReference type="PDB" id="5CR8">
    <property type="method" value="X-ray"/>
    <property type="resolution" value="2.05 A"/>
    <property type="chains" value="A/D=359-471"/>
</dbReference>
<dbReference type="PDB" id="5LY6">
    <property type="method" value="EM"/>
    <property type="resolution" value="4.50 A"/>
    <property type="chains" value="B=1-471"/>
</dbReference>
<dbReference type="PDB" id="7T2A">
    <property type="method" value="X-ray"/>
    <property type="resolution" value="3.04 A"/>
    <property type="chains" value="C/F=429-441"/>
</dbReference>
<dbReference type="PDB" id="7T2B">
    <property type="method" value="X-ray"/>
    <property type="resolution" value="2.80 A"/>
    <property type="chains" value="C/H/M/R=429-441"/>
</dbReference>
<dbReference type="PDB" id="7T2C">
    <property type="method" value="X-ray"/>
    <property type="resolution" value="3.10 A"/>
    <property type="chains" value="C=429-441"/>
</dbReference>
<dbReference type="PDB" id="7T2D">
    <property type="method" value="X-ray"/>
    <property type="resolution" value="3.40 A"/>
    <property type="chains" value="C/H/M/R=429-441"/>
</dbReference>
<dbReference type="PDBsum" id="4ZGH"/>
<dbReference type="PDBsum" id="5AOD"/>
<dbReference type="PDBsum" id="5AOE"/>
<dbReference type="PDBsum" id="5AOF"/>
<dbReference type="PDBsum" id="5CR6"/>
<dbReference type="PDBsum" id="5CR8"/>
<dbReference type="PDBsum" id="5LY6"/>
<dbReference type="PDBsum" id="7T2A"/>
<dbReference type="PDBsum" id="7T2B"/>
<dbReference type="PDBsum" id="7T2C"/>
<dbReference type="PDBsum" id="7T2D"/>
<dbReference type="EMDB" id="EMD-2611"/>
<dbReference type="EMDB" id="EMD-2612"/>
<dbReference type="EMDB" id="EMD-2613"/>
<dbReference type="EMDB" id="EMD-2614"/>
<dbReference type="EMDB" id="EMD-2615"/>
<dbReference type="EMDB" id="EMD-2616"/>
<dbReference type="EMDB" id="EMD-2617"/>
<dbReference type="EMDB" id="EMD-2618"/>
<dbReference type="EMDB" id="EMD-2619"/>
<dbReference type="EMDB" id="EMD-4118"/>
<dbReference type="SMR" id="Q04IN8"/>
<dbReference type="PaxDb" id="373153-SPD_1726"/>
<dbReference type="KEGG" id="spd:SPD_1726"/>
<dbReference type="eggNOG" id="ENOG502Z7ST">
    <property type="taxonomic scope" value="Bacteria"/>
</dbReference>
<dbReference type="HOGENOM" id="CLU_026912_1_0_9"/>
<dbReference type="BioCyc" id="SPNE373153:G1G6V-1864-MONOMER"/>
<dbReference type="EvolutionaryTrace" id="Q04IN8"/>
<dbReference type="PHI-base" id="PHI:6282"/>
<dbReference type="PHI-base" id="PHI:7994"/>
<dbReference type="PHI-base" id="PHI:9909"/>
<dbReference type="Proteomes" id="UP000001452">
    <property type="component" value="Chromosome"/>
</dbReference>
<dbReference type="GO" id="GO:0005576">
    <property type="term" value="C:extracellular region"/>
    <property type="evidence" value="ECO:0007669"/>
    <property type="project" value="UniProtKB-SubCell"/>
</dbReference>
<dbReference type="GO" id="GO:0020002">
    <property type="term" value="C:host cell plasma membrane"/>
    <property type="evidence" value="ECO:0007669"/>
    <property type="project" value="UniProtKB-SubCell"/>
</dbReference>
<dbReference type="GO" id="GO:0016020">
    <property type="term" value="C:membrane"/>
    <property type="evidence" value="ECO:0007669"/>
    <property type="project" value="UniProtKB-KW"/>
</dbReference>
<dbReference type="GO" id="GO:0015485">
    <property type="term" value="F:cholesterol binding"/>
    <property type="evidence" value="ECO:0007669"/>
    <property type="project" value="InterPro"/>
</dbReference>
<dbReference type="GO" id="GO:0090729">
    <property type="term" value="F:toxin activity"/>
    <property type="evidence" value="ECO:0007669"/>
    <property type="project" value="UniProtKB-KW"/>
</dbReference>
<dbReference type="GO" id="GO:0031640">
    <property type="term" value="P:killing of cells of another organism"/>
    <property type="evidence" value="ECO:0007669"/>
    <property type="project" value="UniProtKB-KW"/>
</dbReference>
<dbReference type="FunFam" id="2.60.40.1430:FF:000001">
    <property type="entry name" value="Thiol-activated cytolysin"/>
    <property type="match status" value="1"/>
</dbReference>
<dbReference type="Gene3D" id="3.30.1040.20">
    <property type="match status" value="1"/>
</dbReference>
<dbReference type="Gene3D" id="3.40.30.40">
    <property type="entry name" value="Perfringolysin"/>
    <property type="match status" value="1"/>
</dbReference>
<dbReference type="Gene3D" id="2.60.40.1430">
    <property type="entry name" value="Perfringolysin, domain 4"/>
    <property type="match status" value="1"/>
</dbReference>
<dbReference type="Gene3D" id="3.90.840.10">
    <property type="entry name" value="Thiol-activated cytolysin superfamily/Thiol-activated cytolysin, alpha-beta domain"/>
    <property type="match status" value="1"/>
</dbReference>
<dbReference type="InterPro" id="IPR035390">
    <property type="entry name" value="Thiol_cytolys_C"/>
</dbReference>
<dbReference type="InterPro" id="IPR038700">
    <property type="entry name" value="Thiol_cytolys_C_sf"/>
</dbReference>
<dbReference type="InterPro" id="IPR001869">
    <property type="entry name" value="Thiol_cytolysin"/>
</dbReference>
<dbReference type="InterPro" id="IPR036363">
    <property type="entry name" value="Thiol_cytolysin_ab_sf"/>
</dbReference>
<dbReference type="InterPro" id="IPR036359">
    <property type="entry name" value="Thiol_cytolysin_sf"/>
</dbReference>
<dbReference type="Pfam" id="PF17440">
    <property type="entry name" value="Thiol_cytolys_C"/>
    <property type="match status" value="1"/>
</dbReference>
<dbReference type="Pfam" id="PF01289">
    <property type="entry name" value="Thiol_cytolysin"/>
    <property type="match status" value="1"/>
</dbReference>
<dbReference type="PRINTS" id="PR01400">
    <property type="entry name" value="TACYTOLYSIN"/>
</dbReference>
<dbReference type="SUPFAM" id="SSF56978">
    <property type="entry name" value="Perfringolysin"/>
    <property type="match status" value="1"/>
</dbReference>
<dbReference type="PROSITE" id="PS00481">
    <property type="entry name" value="THIOL_CYTOLYSINS"/>
    <property type="match status" value="1"/>
</dbReference>
<name>TACY_STRP2</name>
<sequence length="471" mass="52899">MANKAVNDFILAMNYDKKKLLTHQGESIENRFIKEGNQLPDEFVVIERKKRSLSTNTSDISVTATNDSRLYPGALLVVDETLLENNPTLLAVDRAPMTYSIDLPGLASSDSFLQVEDPSNSSVRGAVNDLLAKWHQDYGQVNNVPARMQYEKITAHSMEQLKVKFGSDFEKTGNSLDIDFNSVHSGEKQIQIVNFKQIYYTVSVDAVKNPGDVFQDTVTVEDLKQRGISAERPLVYISSVAYGRQVYLKLETTSKSDEVEAAFEALIKGVKVAPQTEWKQILDNTEVKAVILGGDPSSGARVVTGKVDMVEDLIQEGSRFTADHPGLPISYTTSFLRDNVVATFQNSTDYVETKVTAYRNGDLLLDHSGAYVAQYYITWDELSYDHQGKEVLTPKAWDRNGQDLTAHFTTSIPLKGNVRNLSVKIRECTGLAWEWWRTVYEKTDLPLVRKRTISIWGTTLYPQVEDKVEND</sequence>
<keyword id="KW-0002">3D-structure</keyword>
<keyword id="KW-0204">Cytolysis</keyword>
<keyword id="KW-0903">Direct protein sequencing</keyword>
<keyword id="KW-0354">Hemolysis</keyword>
<keyword id="KW-1032">Host cell membrane</keyword>
<keyword id="KW-1043">Host membrane</keyword>
<keyword id="KW-0446">Lipid-binding</keyword>
<keyword id="KW-0472">Membrane</keyword>
<keyword id="KW-1185">Reference proteome</keyword>
<keyword id="KW-0964">Secreted</keyword>
<keyword id="KW-0800">Toxin</keyword>
<keyword id="KW-0812">Transmembrane</keyword>
<keyword id="KW-1134">Transmembrane beta strand</keyword>
<keyword id="KW-0843">Virulence</keyword>